<feature type="chain" id="PRO_0000352049" description="Small ribosomal subunit protein uS2">
    <location>
        <begin position="1"/>
        <end position="242"/>
    </location>
</feature>
<keyword id="KW-0687">Ribonucleoprotein</keyword>
<keyword id="KW-0689">Ribosomal protein</keyword>
<name>RS2_VIBC1</name>
<sequence>MATVSMRDMLKAGVHFGHQTRYWNPKMKPFIFGARNRVHIINLEKTVPMFNEALAELAKVGEKKGKVLFVGTKRAASEAVKEAAIASNQYYVNNRWLGGMLTNYKTVRQSIKRLKDFEAQAQDGTFEKLTKKEALMRTREMEKLEKSLGGIKDMGGLPDALFVIDADHEHIAIKEANNLGIPVYAVVDTNSNPDGVDYIIPGNDDAIRAVQLYLNAAASAVTEGRNKDVAVVAEKDGFVEAE</sequence>
<comment type="similarity">
    <text evidence="1">Belongs to the universal ribosomal protein uS2 family.</text>
</comment>
<comment type="sequence caution" evidence="2">
    <conflict type="erroneous initiation">
        <sequence resource="EMBL-CDS" id="ABU72186"/>
    </conflict>
</comment>
<protein>
    <recommendedName>
        <fullName evidence="1">Small ribosomal subunit protein uS2</fullName>
    </recommendedName>
    <alternativeName>
        <fullName evidence="2">30S ribosomal protein S2</fullName>
    </alternativeName>
</protein>
<organism>
    <name type="scientific">Vibrio campbellii (strain ATCC BAA-1116)</name>
    <dbReference type="NCBI Taxonomy" id="2902295"/>
    <lineage>
        <taxon>Bacteria</taxon>
        <taxon>Pseudomonadati</taxon>
        <taxon>Pseudomonadota</taxon>
        <taxon>Gammaproteobacteria</taxon>
        <taxon>Vibrionales</taxon>
        <taxon>Vibrionaceae</taxon>
        <taxon>Vibrio</taxon>
    </lineage>
</organism>
<gene>
    <name evidence="1" type="primary">rpsB</name>
    <name type="ordered locus">VIBHAR_03237</name>
</gene>
<accession>A7N1X7</accession>
<proteinExistence type="inferred from homology"/>
<evidence type="ECO:0000255" key="1">
    <source>
        <dbReference type="HAMAP-Rule" id="MF_00291"/>
    </source>
</evidence>
<evidence type="ECO:0000305" key="2"/>
<dbReference type="EMBL" id="CP000789">
    <property type="protein sequence ID" value="ABU72186.1"/>
    <property type="status" value="ALT_INIT"/>
    <property type="molecule type" value="Genomic_DNA"/>
</dbReference>
<dbReference type="RefSeq" id="WP_041853288.1">
    <property type="nucleotide sequence ID" value="NC_022269.1"/>
</dbReference>
<dbReference type="SMR" id="A7N1X7"/>
<dbReference type="KEGG" id="vha:VIBHAR_03237"/>
<dbReference type="PATRIC" id="fig|338187.36.peg.3165"/>
<dbReference type="Proteomes" id="UP000008152">
    <property type="component" value="Chromosome I"/>
</dbReference>
<dbReference type="GO" id="GO:0022627">
    <property type="term" value="C:cytosolic small ribosomal subunit"/>
    <property type="evidence" value="ECO:0007669"/>
    <property type="project" value="TreeGrafter"/>
</dbReference>
<dbReference type="GO" id="GO:0003735">
    <property type="term" value="F:structural constituent of ribosome"/>
    <property type="evidence" value="ECO:0007669"/>
    <property type="project" value="InterPro"/>
</dbReference>
<dbReference type="GO" id="GO:0006412">
    <property type="term" value="P:translation"/>
    <property type="evidence" value="ECO:0007669"/>
    <property type="project" value="UniProtKB-UniRule"/>
</dbReference>
<dbReference type="CDD" id="cd01425">
    <property type="entry name" value="RPS2"/>
    <property type="match status" value="1"/>
</dbReference>
<dbReference type="FunFam" id="1.10.287.610:FF:000001">
    <property type="entry name" value="30S ribosomal protein S2"/>
    <property type="match status" value="1"/>
</dbReference>
<dbReference type="Gene3D" id="3.40.50.10490">
    <property type="entry name" value="Glucose-6-phosphate isomerase like protein, domain 1"/>
    <property type="match status" value="1"/>
</dbReference>
<dbReference type="Gene3D" id="1.10.287.610">
    <property type="entry name" value="Helix hairpin bin"/>
    <property type="match status" value="1"/>
</dbReference>
<dbReference type="HAMAP" id="MF_00291_B">
    <property type="entry name" value="Ribosomal_uS2_B"/>
    <property type="match status" value="1"/>
</dbReference>
<dbReference type="InterPro" id="IPR001865">
    <property type="entry name" value="Ribosomal_uS2"/>
</dbReference>
<dbReference type="InterPro" id="IPR005706">
    <property type="entry name" value="Ribosomal_uS2_bac/mit/plastid"/>
</dbReference>
<dbReference type="InterPro" id="IPR018130">
    <property type="entry name" value="Ribosomal_uS2_CS"/>
</dbReference>
<dbReference type="InterPro" id="IPR023591">
    <property type="entry name" value="Ribosomal_uS2_flav_dom_sf"/>
</dbReference>
<dbReference type="NCBIfam" id="TIGR01011">
    <property type="entry name" value="rpsB_bact"/>
    <property type="match status" value="1"/>
</dbReference>
<dbReference type="PANTHER" id="PTHR12534">
    <property type="entry name" value="30S RIBOSOMAL PROTEIN S2 PROKARYOTIC AND ORGANELLAR"/>
    <property type="match status" value="1"/>
</dbReference>
<dbReference type="PANTHER" id="PTHR12534:SF0">
    <property type="entry name" value="SMALL RIBOSOMAL SUBUNIT PROTEIN US2M"/>
    <property type="match status" value="1"/>
</dbReference>
<dbReference type="Pfam" id="PF00318">
    <property type="entry name" value="Ribosomal_S2"/>
    <property type="match status" value="1"/>
</dbReference>
<dbReference type="PRINTS" id="PR00395">
    <property type="entry name" value="RIBOSOMALS2"/>
</dbReference>
<dbReference type="SUPFAM" id="SSF52313">
    <property type="entry name" value="Ribosomal protein S2"/>
    <property type="match status" value="1"/>
</dbReference>
<dbReference type="PROSITE" id="PS00962">
    <property type="entry name" value="RIBOSOMAL_S2_1"/>
    <property type="match status" value="1"/>
</dbReference>
<dbReference type="PROSITE" id="PS00963">
    <property type="entry name" value="RIBOSOMAL_S2_2"/>
    <property type="match status" value="1"/>
</dbReference>
<reference key="1">
    <citation type="submission" date="2007-08" db="EMBL/GenBank/DDBJ databases">
        <authorList>
            <consortium name="The Vibrio harveyi Genome Sequencing Project"/>
            <person name="Bassler B."/>
            <person name="Clifton S.W."/>
            <person name="Fulton L."/>
            <person name="Delehaunty K."/>
            <person name="Fronick C."/>
            <person name="Harrison M."/>
            <person name="Markivic C."/>
            <person name="Fulton R."/>
            <person name="Tin-Wollam A.-M."/>
            <person name="Shah N."/>
            <person name="Pepin K."/>
            <person name="Nash W."/>
            <person name="Thiruvilangam P."/>
            <person name="Bhonagiri V."/>
            <person name="Waters C."/>
            <person name="Tu K.C."/>
            <person name="Irgon J."/>
            <person name="Wilson R.K."/>
        </authorList>
    </citation>
    <scope>NUCLEOTIDE SEQUENCE [LARGE SCALE GENOMIC DNA]</scope>
    <source>
        <strain>ATCC BAA-1116 / BB120</strain>
    </source>
</reference>